<feature type="chain" id="PRO_0000429703" description="Pyrophosphate--fructose 6-phosphate 1-phosphotransferase 2">
    <location>
        <begin position="1"/>
        <end position="426"/>
    </location>
</feature>
<feature type="active site" description="Proton acceptor" evidence="1">
    <location>
        <position position="142"/>
    </location>
</feature>
<feature type="binding site" evidence="1">
    <location>
        <position position="15"/>
    </location>
    <ligand>
        <name>diphosphate</name>
        <dbReference type="ChEBI" id="CHEBI:33019"/>
    </ligand>
</feature>
<feature type="binding site" evidence="1">
    <location>
        <position position="114"/>
    </location>
    <ligand>
        <name>Mg(2+)</name>
        <dbReference type="ChEBI" id="CHEBI:18420"/>
        <note>catalytic</note>
    </ligand>
</feature>
<feature type="binding site" evidence="1">
    <location>
        <begin position="140"/>
        <end position="142"/>
    </location>
    <ligand>
        <name>substrate</name>
    </ligand>
</feature>
<feature type="binding site" evidence="1">
    <location>
        <begin position="186"/>
        <end position="188"/>
    </location>
    <ligand>
        <name>substrate</name>
    </ligand>
</feature>
<feature type="binding site" evidence="1">
    <location>
        <position position="247"/>
    </location>
    <ligand>
        <name>substrate</name>
    </ligand>
</feature>
<feature type="binding site" evidence="1">
    <location>
        <begin position="308"/>
        <end position="311"/>
    </location>
    <ligand>
        <name>substrate</name>
    </ligand>
</feature>
<feature type="site" description="Important for catalytic activity and substrate specificity; stabilizes the transition state when the phosphoryl donor is PPi; prevents ATP from binding by mimicking the alpha-phosphate group of ATP" evidence="1">
    <location>
        <position position="115"/>
    </location>
</feature>
<feature type="site" description="Important for catalytic activity; stabilizes the transition state when the phosphoryl donor is PPi" evidence="1">
    <location>
        <position position="139"/>
    </location>
</feature>
<keyword id="KW-0963">Cytoplasm</keyword>
<keyword id="KW-0903">Direct protein sequencing</keyword>
<keyword id="KW-0324">Glycolysis</keyword>
<keyword id="KW-0418">Kinase</keyword>
<keyword id="KW-0460">Magnesium</keyword>
<keyword id="KW-0479">Metal-binding</keyword>
<keyword id="KW-1185">Reference proteome</keyword>
<keyword id="KW-0808">Transferase</keyword>
<protein>
    <recommendedName>
        <fullName evidence="1">Pyrophosphate--fructose 6-phosphate 1-phosphotransferase 2</fullName>
        <ecNumber evidence="1">2.7.1.90</ecNumber>
    </recommendedName>
    <alternativeName>
        <fullName evidence="1">6-phosphofructokinase, pyrophosphate dependent 2</fullName>
    </alternativeName>
    <alternativeName>
        <fullName evidence="1">PPi-dependent phosphofructokinase 2</fullName>
        <shortName evidence="1">PPi-PFK 2</shortName>
    </alternativeName>
    <alternativeName>
        <fullName evidence="1">Pyrophosphate-dependent 6-phosphofructose-1-kinase 2</fullName>
    </alternativeName>
</protein>
<organism>
    <name type="scientific">Trichomonas vaginalis (strain ATCC PRA-98 / G3)</name>
    <dbReference type="NCBI Taxonomy" id="412133"/>
    <lineage>
        <taxon>Eukaryota</taxon>
        <taxon>Metamonada</taxon>
        <taxon>Parabasalia</taxon>
        <taxon>Trichomonadida</taxon>
        <taxon>Trichomonadidae</taxon>
        <taxon>Trichomonas</taxon>
    </lineage>
</organism>
<proteinExistence type="evidence at protein level"/>
<accession>A2E9H3</accession>
<accession>O61117</accession>
<reference key="1">
    <citation type="journal article" date="2007" name="Science">
        <title>Draft genome sequence of the sexually transmitted pathogen Trichomonas vaginalis.</title>
        <authorList>
            <person name="Carlton J.M."/>
            <person name="Hirt R.P."/>
            <person name="Silva J.C."/>
            <person name="Delcher A.L."/>
            <person name="Schatz M."/>
            <person name="Zhao Q."/>
            <person name="Wortman J.R."/>
            <person name="Bidwell S.L."/>
            <person name="Alsmark U.C.M."/>
            <person name="Besteiro S."/>
            <person name="Sicheritz-Ponten T."/>
            <person name="Noel C.J."/>
            <person name="Dacks J.B."/>
            <person name="Foster P.G."/>
            <person name="Simillion C."/>
            <person name="Van de Peer Y."/>
            <person name="Miranda-Saavedra D."/>
            <person name="Barton G.J."/>
            <person name="Westrop G.D."/>
            <person name="Mueller S."/>
            <person name="Dessi D."/>
            <person name="Fiori P.L."/>
            <person name="Ren Q."/>
            <person name="Paulsen I."/>
            <person name="Zhang H."/>
            <person name="Bastida-Corcuera F.D."/>
            <person name="Simoes-Barbosa A."/>
            <person name="Brown M.T."/>
            <person name="Hayes R.D."/>
            <person name="Mukherjee M."/>
            <person name="Okumura C.Y."/>
            <person name="Schneider R."/>
            <person name="Smith A.J."/>
            <person name="Vanacova S."/>
            <person name="Villalvazo M."/>
            <person name="Haas B.J."/>
            <person name="Pertea M."/>
            <person name="Feldblyum T.V."/>
            <person name="Utterback T.R."/>
            <person name="Shu C.L."/>
            <person name="Osoegawa K."/>
            <person name="de Jong P.J."/>
            <person name="Hrdy I."/>
            <person name="Horvathova L."/>
            <person name="Zubacova Z."/>
            <person name="Dolezal P."/>
            <person name="Malik S.B."/>
            <person name="Logsdon J.M. Jr."/>
            <person name="Henze K."/>
            <person name="Gupta A."/>
            <person name="Wang C.C."/>
            <person name="Dunne R.L."/>
            <person name="Upcroft J.A."/>
            <person name="Upcroft P."/>
            <person name="White O."/>
            <person name="Salzberg S.L."/>
            <person name="Tang P."/>
            <person name="Chiu C.-H."/>
            <person name="Lee Y.-S."/>
            <person name="Embley T.M."/>
            <person name="Coombs G.H."/>
            <person name="Mottram J.C."/>
            <person name="Tachezy J."/>
            <person name="Fraser-Liggett C.M."/>
            <person name="Johnson P.J."/>
        </authorList>
    </citation>
    <scope>NUCLEOTIDE SEQUENCE [LARGE SCALE GENOMIC DNA]</scope>
    <source>
        <strain>ATCC PRA-98 / G3</strain>
    </source>
</reference>
<reference key="2">
    <citation type="journal article" date="1998" name="J. Mol. Evol.">
        <title>The pyrophosphate-dependent phosphofructokinase of the protist, Trichomonas vaginalis, and the evolutionary relationships of protist phosphofructokinases.</title>
        <authorList>
            <person name="Mertens E."/>
            <person name="Ladror U.S."/>
            <person name="Lee J.A."/>
            <person name="Miretsky A."/>
            <person name="Morris A."/>
            <person name="Rozario C."/>
            <person name="Kemp R.G."/>
            <person name="Muller M."/>
        </authorList>
    </citation>
    <scope>NUCLEOTIDE SEQUENCE [GENOMIC DNA] OF 1-210</scope>
    <scope>PROTEIN SEQUENCE OF 107-131; 140-160; 169-175 AND 180-204</scope>
    <scope>SUBUNIT</scope>
    <source>
        <strain>ATCC 30001 / NIH C1</strain>
    </source>
</reference>
<reference key="3">
    <citation type="journal article" date="1989" name="Mol. Biochem. Parasitol.">
        <title>Presence of a fructose-2,6-bisphosphate-insensitive pyrophosphate: fructose-6-phosphate phosphotransferase in the anaerobic protozoa Tritrichomonas foetus, Trichomonas vaginalis and Isotricha prostoma.</title>
        <authorList>
            <person name="Mertens E."/>
            <person name="Van Schaftingen E."/>
            <person name="Muller M."/>
        </authorList>
    </citation>
    <scope>FUNCTION</scope>
    <scope>CATALYTIC ACTIVITY</scope>
    <source>
        <strain>ATCC 30001 / NIH C1</strain>
    </source>
</reference>
<gene>
    <name type="primary">pfk2</name>
    <name type="ORF">TVAG_364620</name>
</gene>
<dbReference type="EC" id="2.7.1.90" evidence="1"/>
<dbReference type="EMBL" id="DS113333">
    <property type="protein sequence ID" value="EAY10737.1"/>
    <property type="molecule type" value="Genomic_DNA"/>
</dbReference>
<dbReference type="EMBL" id="AF053371">
    <property type="protein sequence ID" value="AAD13346.1"/>
    <property type="molecule type" value="Genomic_DNA"/>
</dbReference>
<dbReference type="RefSeq" id="XP_001322960.1">
    <property type="nucleotide sequence ID" value="XM_001322925.1"/>
</dbReference>
<dbReference type="SMR" id="A2E9H3"/>
<dbReference type="STRING" id="5722.A2E9H3"/>
<dbReference type="KEGG" id="tva:TVAG_2v0001150"/>
<dbReference type="VEuPathDB" id="TrichDB:TVAG_364620"/>
<dbReference type="VEuPathDB" id="TrichDB:TVAGG3_0001150"/>
<dbReference type="eggNOG" id="KOG2440">
    <property type="taxonomic scope" value="Eukaryota"/>
</dbReference>
<dbReference type="InParanoid" id="A2E9H3"/>
<dbReference type="OMA" id="SRIHFRG"/>
<dbReference type="OrthoDB" id="537915at2759"/>
<dbReference type="UniPathway" id="UPA00109">
    <property type="reaction ID" value="UER00182"/>
</dbReference>
<dbReference type="Proteomes" id="UP000001542">
    <property type="component" value="Unassembled WGS sequence"/>
</dbReference>
<dbReference type="GO" id="GO:0005737">
    <property type="term" value="C:cytoplasm"/>
    <property type="evidence" value="ECO:0007669"/>
    <property type="project" value="UniProtKB-SubCell"/>
</dbReference>
<dbReference type="GO" id="GO:0003872">
    <property type="term" value="F:6-phosphofructokinase activity"/>
    <property type="evidence" value="ECO:0007669"/>
    <property type="project" value="UniProtKB-UniRule"/>
</dbReference>
<dbReference type="GO" id="GO:0047334">
    <property type="term" value="F:diphosphate-fructose-6-phosphate 1-phosphotransferase activity"/>
    <property type="evidence" value="ECO:0007669"/>
    <property type="project" value="UniProtKB-EC"/>
</dbReference>
<dbReference type="GO" id="GO:0046872">
    <property type="term" value="F:metal ion binding"/>
    <property type="evidence" value="ECO:0007669"/>
    <property type="project" value="UniProtKB-KW"/>
</dbReference>
<dbReference type="GO" id="GO:0008443">
    <property type="term" value="F:phosphofructokinase activity"/>
    <property type="evidence" value="ECO:0000318"/>
    <property type="project" value="GO_Central"/>
</dbReference>
<dbReference type="GO" id="GO:0006002">
    <property type="term" value="P:fructose 6-phosphate metabolic process"/>
    <property type="evidence" value="ECO:0007669"/>
    <property type="project" value="InterPro"/>
</dbReference>
<dbReference type="GO" id="GO:0009749">
    <property type="term" value="P:response to glucose"/>
    <property type="evidence" value="ECO:0000318"/>
    <property type="project" value="GO_Central"/>
</dbReference>
<dbReference type="FunFam" id="3.40.50.450:FF:000039">
    <property type="entry name" value="Pyrophosphate--fructose 6-phosphate 1-phosphotransferase"/>
    <property type="match status" value="1"/>
</dbReference>
<dbReference type="FunFam" id="3.40.50.460:FF:000020">
    <property type="entry name" value="Pyrophosphate--fructose 6-phosphate 1-phosphotransferase 1"/>
    <property type="match status" value="1"/>
</dbReference>
<dbReference type="Gene3D" id="3.40.50.450">
    <property type="match status" value="1"/>
</dbReference>
<dbReference type="Gene3D" id="3.40.50.460">
    <property type="entry name" value="Phosphofructokinase domain"/>
    <property type="match status" value="1"/>
</dbReference>
<dbReference type="HAMAP" id="MF_01979">
    <property type="entry name" value="Phosphofructokinase_II_Short"/>
    <property type="match status" value="1"/>
</dbReference>
<dbReference type="InterPro" id="IPR022953">
    <property type="entry name" value="ATP_PFK"/>
</dbReference>
<dbReference type="InterPro" id="IPR000023">
    <property type="entry name" value="Phosphofructokinase_dom"/>
</dbReference>
<dbReference type="InterPro" id="IPR035966">
    <property type="entry name" value="PKF_sf"/>
</dbReference>
<dbReference type="InterPro" id="IPR011403">
    <property type="entry name" value="PPi-PFK_TM0289"/>
</dbReference>
<dbReference type="PANTHER" id="PTHR43650">
    <property type="entry name" value="PYROPHOSPHATE--FRUCTOSE 6-PHOSPHATE 1-PHOSPHOTRANSFERASE"/>
    <property type="match status" value="1"/>
</dbReference>
<dbReference type="PANTHER" id="PTHR43650:SF1">
    <property type="entry name" value="PYROPHOSPHATE--FRUCTOSE 6-PHOSPHATE 1-PHOSPHOTRANSFERASE SUBUNIT BETA 2"/>
    <property type="match status" value="1"/>
</dbReference>
<dbReference type="Pfam" id="PF00365">
    <property type="entry name" value="PFK"/>
    <property type="match status" value="1"/>
</dbReference>
<dbReference type="PIRSF" id="PIRSF036482">
    <property type="entry name" value="PPi_PFK_TM0289"/>
    <property type="match status" value="1"/>
</dbReference>
<dbReference type="PRINTS" id="PR00476">
    <property type="entry name" value="PHFRCTKINASE"/>
</dbReference>
<dbReference type="SUPFAM" id="SSF53784">
    <property type="entry name" value="Phosphofructokinase"/>
    <property type="match status" value="1"/>
</dbReference>
<evidence type="ECO:0000255" key="1">
    <source>
        <dbReference type="HAMAP-Rule" id="MF_01979"/>
    </source>
</evidence>
<evidence type="ECO:0000269" key="2">
    <source>
    </source>
</evidence>
<evidence type="ECO:0000269" key="3">
    <source>
    </source>
</evidence>
<comment type="function">
    <text evidence="1 2">Catalyzes the phosphorylation of D-fructose 6-phosphate, the first committing step of glycolysis. Uses inorganic phosphate (PPi) as phosphoryl donor instead of ATP like common ATP-dependent phosphofructokinases (ATP-PFKs), which renders the reaction reversible, and can thus function both in glycolysis and gluconeogenesis. Consistently, PPi-PFK can replace the enzymes of both the forward (ATP-PFK) and reverse (fructose-bisphosphatase (FBPase)) reactions.</text>
</comment>
<comment type="catalytic activity">
    <reaction evidence="1 2">
        <text>beta-D-fructose 6-phosphate + diphosphate = beta-D-fructose 1,6-bisphosphate + phosphate + H(+)</text>
        <dbReference type="Rhea" id="RHEA:13613"/>
        <dbReference type="ChEBI" id="CHEBI:15378"/>
        <dbReference type="ChEBI" id="CHEBI:32966"/>
        <dbReference type="ChEBI" id="CHEBI:33019"/>
        <dbReference type="ChEBI" id="CHEBI:43474"/>
        <dbReference type="ChEBI" id="CHEBI:57634"/>
        <dbReference type="EC" id="2.7.1.90"/>
    </reaction>
</comment>
<comment type="cofactor">
    <cofactor evidence="1">
        <name>Mg(2+)</name>
        <dbReference type="ChEBI" id="CHEBI:18420"/>
    </cofactor>
</comment>
<comment type="activity regulation">
    <text evidence="1">Non-allosteric.</text>
</comment>
<comment type="pathway">
    <text evidence="1">Carbohydrate degradation; glycolysis; D-glyceraldehyde 3-phosphate and glycerone phosphate from D-glucose: step 3/4.</text>
</comment>
<comment type="subunit">
    <text evidence="1 3">Homotetramer.</text>
</comment>
<comment type="subcellular location">
    <subcellularLocation>
        <location evidence="1">Cytoplasm</location>
    </subcellularLocation>
</comment>
<comment type="similarity">
    <text evidence="1">Belongs to the phosphofructokinase type A (PFKA) family. PPi-dependent PFK group II subfamily. Clade 'Short' sub-subfamily.</text>
</comment>
<name>PFP2_TRIV3</name>
<sequence length="426" mass="46653">MSTEAPVLGILCGGGPAPGLNGVIAGATLYALRLGWKVIGFMEGFKYLCTGDIETVKAHTIDLTYDIVSRIHFQGGTIIQTSRANPRKSTELQENVRKCLRALKVRYFLTIGGDDTASSAVSVAQGMDGNEISVISCPKTIDNDLPLPADQSTFGFHTARSLGMEIIRNLMVDSKSAPRWFLVEAMGRSAGHLALGMAEASGAHLCLIPEEFKQDEIEFEDVVELVEATILKRLAYGKNYGVCVLAEGLVSKMSKKALYRLFGNREPPTDPHGHILLDDAELARSLSEELLKRLGNLGIRITPKKIGYELRCADPVAFDAVYTRELGYGAIDAFLNGHSAALIVRENGQVKPVQFKDLLDPATGRVRTRLVDVTSQSFKVARVYMWRMSKKDYENKDLVARVAAAGKMTPEAFTEKFAHLTDVVIE</sequence>